<name>OMP1_COXBU</name>
<accession>Q83EK8</accession>
<accession>Q841J3</accession>
<accession>Q841J4</accession>
<accession>Q8KQK0</accession>
<proteinExistence type="evidence at protein level"/>
<gene>
    <name type="primary">ompP1</name>
    <name type="ordered locus">CBU_0311</name>
</gene>
<reference key="1">
    <citation type="journal article" date="2002" name="Infect. Immun.">
        <title>Cloning and porin activity of the major outer membrane protein P1 from Coxiella burnetii.</title>
        <authorList>
            <person name="Varghees S."/>
            <person name="Kiss K."/>
            <person name="Frans G."/>
            <person name="Braha O."/>
            <person name="Samuel J.E."/>
        </authorList>
    </citation>
    <scope>NUCLEOTIDE SEQUENCE [GENOMIC DNA]</scope>
    <scope>PROTEIN SEQUENCE OF 24-43 AND 188-199</scope>
    <scope>SUBCELLULAR LOCATION</scope>
    <scope>SUBUNIT</scope>
    <scope>ION CONDUCTANCE</scope>
    <source>
        <strain>Kerns</strain>
        <strain>Koka</strain>
        <strain>RSA 493 / Nine Mile phase I</strain>
        <strain>Scurry</strain>
    </source>
</reference>
<reference key="2">
    <citation type="submission" date="2003-03" db="EMBL/GenBank/DDBJ databases">
        <title>Cloning and expression of major outer membrane protein P1 gene of Coxiella burnetii in Escherichia coli.</title>
        <authorList>
            <person name="Wei W."/>
            <person name="Wen B."/>
        </authorList>
    </citation>
    <scope>NUCLEOTIDE SEQUENCE [GENOMIC DNA]</scope>
    <source>
        <strain>Henzerling</strain>
        <strain>Xinqiao</strain>
    </source>
</reference>
<reference key="3">
    <citation type="journal article" date="2003" name="Proc. Natl. Acad. Sci. U.S.A.">
        <title>Complete genome sequence of the Q-fever pathogen, Coxiella burnetii.</title>
        <authorList>
            <person name="Seshadri R."/>
            <person name="Paulsen I.T."/>
            <person name="Eisen J.A."/>
            <person name="Read T.D."/>
            <person name="Nelson K.E."/>
            <person name="Nelson W.C."/>
            <person name="Ward N.L."/>
            <person name="Tettelin H."/>
            <person name="Davidsen T.M."/>
            <person name="Beanan M.J."/>
            <person name="DeBoy R.T."/>
            <person name="Daugherty S.C."/>
            <person name="Brinkac L.M."/>
            <person name="Madupu R."/>
            <person name="Dodson R.J."/>
            <person name="Khouri H.M."/>
            <person name="Lee K.H."/>
            <person name="Carty H.A."/>
            <person name="Scanlan D."/>
            <person name="Heinzen R.A."/>
            <person name="Thompson H.A."/>
            <person name="Samuel J.E."/>
            <person name="Fraser C.M."/>
            <person name="Heidelberg J.F."/>
        </authorList>
    </citation>
    <scope>NUCLEOTIDE SEQUENCE [LARGE SCALE GENOMIC DNA]</scope>
    <source>
        <strain>RSA 493 / Nine Mile phase I</strain>
    </source>
</reference>
<reference key="4">
    <citation type="journal article" date="2005" name="Ann. N. Y. Acad. Sci.">
        <title>Protective immunity against Q fever induced with a recombinant P1 antigen fused with HspB of Coxiella burnetii.</title>
        <authorList>
            <person name="Li Q."/>
            <person name="Niu D."/>
            <person name="Wen B."/>
            <person name="Chen M."/>
            <person name="Qiu L."/>
            <person name="Zhang J."/>
        </authorList>
    </citation>
    <scope>BIOTECHNOLOGY</scope>
</reference>
<sequence>METTTKLAIGVSALCCLASAAFAGGPDIPMIDMNGFHIGLGFGYKSYTYDQVGTVTVTTNGGTVLSVLHPVSASITQFGPVGELGYTFASDWWIAGVKAQYQYDNVRSVHIMDAPLVGSNYSYRTRLGSHLTAMLLAGIKVNEANAVYLEAGYSTVWGKTTLFGPGPVAVSMKNRLNGGIAGIGWRHYFMNNVFLDLSYDYALYRSKSNSVTLSSATASAEGTAIGVSGTVQNPKRVAINGITATVNYLFNI</sequence>
<evidence type="ECO:0000269" key="1">
    <source>
    </source>
</evidence>
<evidence type="ECO:0000269" key="2">
    <source>
    </source>
</evidence>
<evidence type="ECO:0000305" key="3"/>
<comment type="function">
    <text>Able to form a pore in lipid bilayers.</text>
</comment>
<comment type="subunit">
    <text evidence="1">May form trimers.</text>
</comment>
<comment type="subcellular location">
    <subcellularLocation>
        <location evidence="1">Cell outer membrane</location>
        <topology evidence="1">Multi-pass membrane protein</topology>
    </subcellularLocation>
    <text>Outer membrane location shown for Nine Mile phase I, but not that it actually spans the membrane.</text>
</comment>
<comment type="developmental stage">
    <text>Found in the large cell variant (LCV) stage, very little is present in the small cell variant (SCV) stage (at protein level). LCVs are more metabolically active than SCVs.</text>
</comment>
<comment type="biotechnology">
    <text evidence="2">Might be used for vaccine production.</text>
</comment>
<comment type="similarity">
    <text evidence="3">Belongs to the Coxiella porin P1 (CPP1) (TC 1.B.43) family.</text>
</comment>
<feature type="signal peptide" evidence="1">
    <location>
        <begin position="1"/>
        <end position="23"/>
    </location>
</feature>
<feature type="chain" id="PRO_0000318560" description="Outer membrane protein P1">
    <location>
        <begin position="24"/>
        <end position="252"/>
    </location>
</feature>
<feature type="sequence variant" description="In strain: Henzerling.">
    <original>L</original>
    <variation>F</variation>
    <location>
        <position position="17"/>
    </location>
</feature>
<feature type="sequence variant" description="In strain: Henzerling.">
    <original>M</original>
    <variation>L</variation>
    <location>
        <position position="33"/>
    </location>
</feature>
<feature type="sequence variant" description="In strain: Kerns.">
    <original>N</original>
    <variation>D</variation>
    <location>
        <position position="60"/>
    </location>
</feature>
<feature type="sequence variant" description="In strain: Xinqiao.">
    <original>F</original>
    <variation>S</variation>
    <location>
        <position position="78"/>
    </location>
</feature>
<feature type="sequence variant" description="In strain: Kerns.">
    <original>G</original>
    <variation>S</variation>
    <location>
        <position position="79"/>
    </location>
</feature>
<feature type="sequence variant" description="In strain: Scurry.">
    <original>P</original>
    <variation>S</variation>
    <location>
        <position position="115"/>
    </location>
</feature>
<feature type="sequence variant" description="In strain: Kerns and Scurry.">
    <original>NYS</original>
    <variation>T</variation>
    <location>
        <begin position="120"/>
        <end position="122"/>
    </location>
</feature>
<feature type="sequence variant" description="In strain: Xinqiao.">
    <original>T</original>
    <variation>I</variation>
    <location>
        <position position="125"/>
    </location>
</feature>
<feature type="sequence variant" description="In strain: Kerns.">
    <original>L</original>
    <variation>T</variation>
    <location>
        <position position="127"/>
    </location>
</feature>
<feature type="sequence variant" description="In strain: Xinqiao.">
    <original>L</original>
    <variation>F</variation>
    <location>
        <position position="131"/>
    </location>
</feature>
<feature type="sequence variant" description="In strain: Kerns.">
    <original>L</original>
    <variation>I</variation>
    <location>
        <position position="136"/>
    </location>
</feature>
<feature type="sequence variant" description="In strain: Kerns.">
    <original>VY</original>
    <variation>DD</variation>
    <location>
        <begin position="147"/>
        <end position="148"/>
    </location>
</feature>
<feature type="sequence variant" description="In strain: Kerns.">
    <original>AG</original>
    <variation>SE</variation>
    <location>
        <begin position="151"/>
        <end position="152"/>
    </location>
</feature>
<feature type="sequence variant" description="In strain: Kerns.">
    <original>VAVS</original>
    <variation>GPVG</variation>
    <location>
        <begin position="168"/>
        <end position="171"/>
    </location>
</feature>
<feature type="sequence variant" description="In strain: Xinqiao.">
    <original>M</original>
    <variation>I</variation>
    <location>
        <position position="172"/>
    </location>
</feature>
<feature type="sequence variant" description="In strain: Kerns.">
    <original>L</original>
    <variation>M</variation>
    <location>
        <position position="176"/>
    </location>
</feature>
<feature type="sequence variant" description="In strain: Kerns and Scurry.">
    <original>GT</original>
    <variation>EA</variation>
    <location>
        <begin position="222"/>
        <end position="223"/>
    </location>
</feature>
<feature type="sequence variant" description="In strain: Kerns and Scurry.">
    <original>S</original>
    <variation>L</variation>
    <location>
        <position position="228"/>
    </location>
</feature>
<feature type="sequence conflict" description="In Ref. 1; AA sequence." evidence="3" ref="1">
    <original>N</original>
    <variation>I</variation>
    <location>
        <position position="192"/>
    </location>
</feature>
<feature type="sequence conflict" description="In Ref. 1; AA sequence." evidence="3" ref="1">
    <original>Y</original>
    <variation>D</variation>
    <location>
        <position position="199"/>
    </location>
</feature>
<dbReference type="EMBL" id="AY082614">
    <property type="protein sequence ID" value="AAM03442.1"/>
    <property type="molecule type" value="Genomic_DNA"/>
</dbReference>
<dbReference type="EMBL" id="AY249912">
    <property type="protein sequence ID" value="AAP04426.1"/>
    <property type="molecule type" value="Genomic_DNA"/>
</dbReference>
<dbReference type="EMBL" id="AY249911">
    <property type="protein sequence ID" value="AAP04425.1"/>
    <property type="molecule type" value="Genomic_DNA"/>
</dbReference>
<dbReference type="EMBL" id="AE016828">
    <property type="protein sequence ID" value="AAO89868.2"/>
    <property type="molecule type" value="Genomic_DNA"/>
</dbReference>
<dbReference type="RefSeq" id="NP_819354.2">
    <property type="nucleotide sequence ID" value="NC_002971.3"/>
</dbReference>
<dbReference type="RefSeq" id="WP_010957496.1">
    <property type="nucleotide sequence ID" value="NC_002971.4"/>
</dbReference>
<dbReference type="STRING" id="227377.CBU_0311"/>
<dbReference type="TCDB" id="1.B.43.1.1">
    <property type="family name" value="the coxiella porin p1 (cpp1) family"/>
</dbReference>
<dbReference type="EnsemblBacteria" id="AAO89868">
    <property type="protein sequence ID" value="AAO89868"/>
    <property type="gene ID" value="CBU_0311"/>
</dbReference>
<dbReference type="GeneID" id="1208193"/>
<dbReference type="KEGG" id="cbu:CBU_0311"/>
<dbReference type="PATRIC" id="fig|227377.7.peg.303"/>
<dbReference type="eggNOG" id="COG3637">
    <property type="taxonomic scope" value="Bacteria"/>
</dbReference>
<dbReference type="HOGENOM" id="CLU_1238523_0_0_6"/>
<dbReference type="Proteomes" id="UP000002671">
    <property type="component" value="Chromosome"/>
</dbReference>
<dbReference type="GO" id="GO:0009279">
    <property type="term" value="C:cell outer membrane"/>
    <property type="evidence" value="ECO:0007669"/>
    <property type="project" value="UniProtKB-SubCell"/>
</dbReference>
<dbReference type="GO" id="GO:0046930">
    <property type="term" value="C:pore complex"/>
    <property type="evidence" value="ECO:0007669"/>
    <property type="project" value="UniProtKB-KW"/>
</dbReference>
<dbReference type="GO" id="GO:0015288">
    <property type="term" value="F:porin activity"/>
    <property type="evidence" value="ECO:0007669"/>
    <property type="project" value="UniProtKB-KW"/>
</dbReference>
<dbReference type="GO" id="GO:0006811">
    <property type="term" value="P:monoatomic ion transport"/>
    <property type="evidence" value="ECO:0007669"/>
    <property type="project" value="UniProtKB-KW"/>
</dbReference>
<dbReference type="InterPro" id="IPR011250">
    <property type="entry name" value="OMP/PagP_b-brl"/>
</dbReference>
<dbReference type="InterPro" id="IPR027385">
    <property type="entry name" value="OMP_b-brl"/>
</dbReference>
<dbReference type="Pfam" id="PF13505">
    <property type="entry name" value="OMP_b-brl"/>
    <property type="match status" value="1"/>
</dbReference>
<dbReference type="SUPFAM" id="SSF56925">
    <property type="entry name" value="OMPA-like"/>
    <property type="match status" value="1"/>
</dbReference>
<organism>
    <name type="scientific">Coxiella burnetii (strain RSA 493 / Nine Mile phase I)</name>
    <dbReference type="NCBI Taxonomy" id="227377"/>
    <lineage>
        <taxon>Bacteria</taxon>
        <taxon>Pseudomonadati</taxon>
        <taxon>Pseudomonadota</taxon>
        <taxon>Gammaproteobacteria</taxon>
        <taxon>Legionellales</taxon>
        <taxon>Coxiellaceae</taxon>
        <taxon>Coxiella</taxon>
    </lineage>
</organism>
<protein>
    <recommendedName>
        <fullName>Outer membrane protein P1</fullName>
    </recommendedName>
</protein>
<keyword id="KW-0998">Cell outer membrane</keyword>
<keyword id="KW-0903">Direct protein sequencing</keyword>
<keyword id="KW-0406">Ion transport</keyword>
<keyword id="KW-0472">Membrane</keyword>
<keyword id="KW-0582">Pharmaceutical</keyword>
<keyword id="KW-0626">Porin</keyword>
<keyword id="KW-1185">Reference proteome</keyword>
<keyword id="KW-0732">Signal</keyword>
<keyword id="KW-0812">Transmembrane</keyword>
<keyword id="KW-1134">Transmembrane beta strand</keyword>
<keyword id="KW-0813">Transport</keyword>